<reference key="1">
    <citation type="journal article" date="2009" name="J. Bacteriol.">
        <title>Complete genome sequence of Rhodobacter sphaeroides KD131.</title>
        <authorList>
            <person name="Lim S.-K."/>
            <person name="Kim S.J."/>
            <person name="Cha S.H."/>
            <person name="Oh Y.-K."/>
            <person name="Rhee H.-J."/>
            <person name="Kim M.-S."/>
            <person name="Lee J.K."/>
        </authorList>
    </citation>
    <scope>NUCLEOTIDE SEQUENCE [LARGE SCALE GENOMIC DNA]</scope>
    <source>
        <strain>KD131 / KCTC 12085</strain>
    </source>
</reference>
<protein>
    <recommendedName>
        <fullName evidence="1">Large ribosomal subunit protein uL1</fullName>
    </recommendedName>
    <alternativeName>
        <fullName evidence="2">50S ribosomal protein L1</fullName>
    </alternativeName>
</protein>
<feature type="chain" id="PRO_1000165696" description="Large ribosomal subunit protein uL1">
    <location>
        <begin position="1"/>
        <end position="232"/>
    </location>
</feature>
<sequence length="232" mass="24246">MAKVGKRTRSAREAFVGKDLISVEDAVALIKQAASAKFDETLEVAMNLGVDPRHADQMVRGVVTLPNGTGKTVRVAVFARGAKADEAKAAGADIVGAEDLMETIQSGKIEFDRCIATPDMMPLVGRLGKILGPRNLMPNPKVGTVTMDVKSAVEAAKGGEVQFKVEKAGVIHAGVGKMSFEADKLAQNVRAFVDAVNRAKPAGAKGTYLKKVSLSSTMGPGVSVDLTSATSH</sequence>
<gene>
    <name evidence="1" type="primary">rplA</name>
    <name type="ordered locus">RSKD131_0003</name>
</gene>
<name>RL1_CERSK</name>
<dbReference type="EMBL" id="CP001150">
    <property type="protein sequence ID" value="ACL99862.1"/>
    <property type="molecule type" value="Genomic_DNA"/>
</dbReference>
<dbReference type="RefSeq" id="WP_002722474.1">
    <property type="nucleotide sequence ID" value="NC_011963.1"/>
</dbReference>
<dbReference type="SMR" id="B9KL80"/>
<dbReference type="GeneID" id="67445489"/>
<dbReference type="KEGG" id="rsk:RSKD131_0003"/>
<dbReference type="HOGENOM" id="CLU_062853_0_0_5"/>
<dbReference type="GO" id="GO:0022625">
    <property type="term" value="C:cytosolic large ribosomal subunit"/>
    <property type="evidence" value="ECO:0007669"/>
    <property type="project" value="TreeGrafter"/>
</dbReference>
<dbReference type="GO" id="GO:0019843">
    <property type="term" value="F:rRNA binding"/>
    <property type="evidence" value="ECO:0007669"/>
    <property type="project" value="UniProtKB-UniRule"/>
</dbReference>
<dbReference type="GO" id="GO:0003735">
    <property type="term" value="F:structural constituent of ribosome"/>
    <property type="evidence" value="ECO:0007669"/>
    <property type="project" value="InterPro"/>
</dbReference>
<dbReference type="GO" id="GO:0000049">
    <property type="term" value="F:tRNA binding"/>
    <property type="evidence" value="ECO:0007669"/>
    <property type="project" value="UniProtKB-KW"/>
</dbReference>
<dbReference type="GO" id="GO:0006417">
    <property type="term" value="P:regulation of translation"/>
    <property type="evidence" value="ECO:0007669"/>
    <property type="project" value="UniProtKB-KW"/>
</dbReference>
<dbReference type="GO" id="GO:0006412">
    <property type="term" value="P:translation"/>
    <property type="evidence" value="ECO:0007669"/>
    <property type="project" value="UniProtKB-UniRule"/>
</dbReference>
<dbReference type="CDD" id="cd00403">
    <property type="entry name" value="Ribosomal_L1"/>
    <property type="match status" value="1"/>
</dbReference>
<dbReference type="FunFam" id="3.40.50.790:FF:000001">
    <property type="entry name" value="50S ribosomal protein L1"/>
    <property type="match status" value="1"/>
</dbReference>
<dbReference type="Gene3D" id="3.30.190.20">
    <property type="match status" value="1"/>
</dbReference>
<dbReference type="Gene3D" id="3.40.50.790">
    <property type="match status" value="1"/>
</dbReference>
<dbReference type="HAMAP" id="MF_01318_B">
    <property type="entry name" value="Ribosomal_uL1_B"/>
    <property type="match status" value="1"/>
</dbReference>
<dbReference type="InterPro" id="IPR005878">
    <property type="entry name" value="Ribosom_uL1_bac-type"/>
</dbReference>
<dbReference type="InterPro" id="IPR002143">
    <property type="entry name" value="Ribosomal_uL1"/>
</dbReference>
<dbReference type="InterPro" id="IPR023674">
    <property type="entry name" value="Ribosomal_uL1-like"/>
</dbReference>
<dbReference type="InterPro" id="IPR028364">
    <property type="entry name" value="Ribosomal_uL1/biogenesis"/>
</dbReference>
<dbReference type="InterPro" id="IPR016095">
    <property type="entry name" value="Ribosomal_uL1_3-a/b-sand"/>
</dbReference>
<dbReference type="InterPro" id="IPR023673">
    <property type="entry name" value="Ribosomal_uL1_CS"/>
</dbReference>
<dbReference type="NCBIfam" id="TIGR01169">
    <property type="entry name" value="rplA_bact"/>
    <property type="match status" value="1"/>
</dbReference>
<dbReference type="PANTHER" id="PTHR36427">
    <property type="entry name" value="54S RIBOSOMAL PROTEIN L1, MITOCHONDRIAL"/>
    <property type="match status" value="1"/>
</dbReference>
<dbReference type="PANTHER" id="PTHR36427:SF3">
    <property type="entry name" value="LARGE RIBOSOMAL SUBUNIT PROTEIN UL1M"/>
    <property type="match status" value="1"/>
</dbReference>
<dbReference type="Pfam" id="PF00687">
    <property type="entry name" value="Ribosomal_L1"/>
    <property type="match status" value="1"/>
</dbReference>
<dbReference type="PIRSF" id="PIRSF002155">
    <property type="entry name" value="Ribosomal_L1"/>
    <property type="match status" value="1"/>
</dbReference>
<dbReference type="SUPFAM" id="SSF56808">
    <property type="entry name" value="Ribosomal protein L1"/>
    <property type="match status" value="1"/>
</dbReference>
<dbReference type="PROSITE" id="PS01199">
    <property type="entry name" value="RIBOSOMAL_L1"/>
    <property type="match status" value="1"/>
</dbReference>
<evidence type="ECO:0000255" key="1">
    <source>
        <dbReference type="HAMAP-Rule" id="MF_01318"/>
    </source>
</evidence>
<evidence type="ECO:0000305" key="2"/>
<accession>B9KL80</accession>
<proteinExistence type="inferred from homology"/>
<organism>
    <name type="scientific">Cereibacter sphaeroides (strain KD131 / KCTC 12085)</name>
    <name type="common">Rhodobacter sphaeroides</name>
    <dbReference type="NCBI Taxonomy" id="557760"/>
    <lineage>
        <taxon>Bacteria</taxon>
        <taxon>Pseudomonadati</taxon>
        <taxon>Pseudomonadota</taxon>
        <taxon>Alphaproteobacteria</taxon>
        <taxon>Rhodobacterales</taxon>
        <taxon>Paracoccaceae</taxon>
        <taxon>Cereibacter</taxon>
    </lineage>
</organism>
<comment type="function">
    <text evidence="1">Binds directly to 23S rRNA. The L1 stalk is quite mobile in the ribosome, and is involved in E site tRNA release.</text>
</comment>
<comment type="function">
    <text evidence="1">Protein L1 is also a translational repressor protein, it controls the translation of the L11 operon by binding to its mRNA.</text>
</comment>
<comment type="subunit">
    <text evidence="1">Part of the 50S ribosomal subunit.</text>
</comment>
<comment type="similarity">
    <text evidence="1">Belongs to the universal ribosomal protein uL1 family.</text>
</comment>
<keyword id="KW-0678">Repressor</keyword>
<keyword id="KW-0687">Ribonucleoprotein</keyword>
<keyword id="KW-0689">Ribosomal protein</keyword>
<keyword id="KW-0694">RNA-binding</keyword>
<keyword id="KW-0699">rRNA-binding</keyword>
<keyword id="KW-0810">Translation regulation</keyword>
<keyword id="KW-0820">tRNA-binding</keyword>